<gene>
    <name type="primary">occQ</name>
</gene>
<proteinExistence type="evidence at transcript level"/>
<protein>
    <recommendedName>
        <fullName>Octopine transport system permease protein OccQ</fullName>
    </recommendedName>
</protein>
<keyword id="KW-0997">Cell inner membrane</keyword>
<keyword id="KW-1003">Cell membrane</keyword>
<keyword id="KW-0472">Membrane</keyword>
<keyword id="KW-0614">Plasmid</keyword>
<keyword id="KW-0812">Transmembrane</keyword>
<keyword id="KW-1133">Transmembrane helix</keyword>
<keyword id="KW-0813">Transport</keyword>
<evidence type="ECO:0000250" key="1"/>
<evidence type="ECO:0000255" key="2">
    <source>
        <dbReference type="PROSITE-ProRule" id="PRU00441"/>
    </source>
</evidence>
<evidence type="ECO:0000305" key="3"/>
<name>OCCQ_RHIRD</name>
<accession>P0A4N5</accession>
<accession>P35119</accession>
<comment type="function">
    <text>Component of the octopine active transport system probably consisting of four subunits: Q, M, P and T.</text>
</comment>
<comment type="subcellular location">
    <subcellularLocation>
        <location evidence="1">Cell inner membrane</location>
        <topology evidence="2">Multi-pass membrane protein</topology>
    </subcellularLocation>
</comment>
<comment type="induction">
    <text>By octopine.</text>
</comment>
<comment type="similarity">
    <text evidence="3">Belongs to the binding-protein-dependent transport system permease family. HisMQ subfamily.</text>
</comment>
<organism>
    <name type="scientific">Rhizobium radiobacter</name>
    <name type="common">Agrobacterium tumefaciens</name>
    <name type="synonym">Agrobacterium radiobacter</name>
    <dbReference type="NCBI Taxonomy" id="358"/>
    <lineage>
        <taxon>Bacteria</taxon>
        <taxon>Pseudomonadati</taxon>
        <taxon>Pseudomonadota</taxon>
        <taxon>Alphaproteobacteria</taxon>
        <taxon>Hyphomicrobiales</taxon>
        <taxon>Rhizobiaceae</taxon>
        <taxon>Rhizobium/Agrobacterium group</taxon>
        <taxon>Agrobacterium</taxon>
        <taxon>Agrobacterium tumefaciens complex</taxon>
    </lineage>
</organism>
<reference key="1">
    <citation type="journal article" date="1991" name="J. Bacteriol.">
        <title>Characterization of a putative periplasmic transport system for octopine accumulation encoded by Agrobacterium tumefaciens Ti plasmid pTiA6.</title>
        <authorList>
            <person name="Valdivia R.H."/>
            <person name="Wang L."/>
            <person name="Winans S.C."/>
        </authorList>
    </citation>
    <scope>NUCLEOTIDE SEQUENCE [GENOMIC DNA]</scope>
    <source>
        <plasmid>pTiA6NC</plasmid>
    </source>
</reference>
<reference key="2">
    <citation type="journal article" date="1992" name="J. Bacteriol.">
        <title>Opine transport genes in the octopine (occ) and nopaline (noc) catabolic regions in Ti plasmids of Agrobacterium tumefaciens.</title>
        <authorList>
            <person name="Zanker H."/>
            <person name="von Lintig J."/>
            <person name="Schroeder J."/>
        </authorList>
    </citation>
    <scope>NUCLEOTIDE SEQUENCE [GENOMIC DNA]</scope>
    <source>
        <plasmid>pTiB6S3</plasmid>
    </source>
</reference>
<sequence length="237" mass="24801">MDYSQLMGFGPDGWGYDMLRATAMTMAVAFSGFTIGLVFGCLGAAASLSSSGALQAAASGYTTALRGIPDLLVIYLFYFGSSSVISNVASLFGSSGFVGASTFLIGALAIGVVSGAYQTQVLRGAVLALNKGEIEAGRAYGMGALLLFRRIVLPQAARYALPGVGNVWQLVLKESALISVIGLVELMRQAQVGSGSTRQPFSFYLTAAALYLLITFVSGQVFRLAETRSMRGLQRGV</sequence>
<feature type="chain" id="PRO_0000060130" description="Octopine transport system permease protein OccQ">
    <location>
        <begin position="1"/>
        <end position="237"/>
    </location>
</feature>
<feature type="transmembrane region" description="Helical" evidence="2">
    <location>
        <begin position="26"/>
        <end position="46"/>
    </location>
</feature>
<feature type="transmembrane region" description="Helical" evidence="2">
    <location>
        <begin position="72"/>
        <end position="92"/>
    </location>
</feature>
<feature type="transmembrane region" description="Helical" evidence="2">
    <location>
        <begin position="96"/>
        <end position="116"/>
    </location>
</feature>
<feature type="transmembrane region" description="Helical" evidence="2">
    <location>
        <begin position="201"/>
        <end position="221"/>
    </location>
</feature>
<feature type="domain" description="ABC transmembrane type-1" evidence="2">
    <location>
        <begin position="22"/>
        <end position="222"/>
    </location>
</feature>
<geneLocation type="plasmid">
    <name>pTiA6NC</name>
</geneLocation>
<geneLocation type="plasmid">
    <name>pTiB6S3</name>
</geneLocation>
<dbReference type="EMBL" id="AF242881">
    <property type="protein sequence ID" value="AAA98379.1"/>
    <property type="molecule type" value="Genomic_DNA"/>
</dbReference>
<dbReference type="EMBL" id="M77784">
    <property type="protein sequence ID" value="AAA50514.1"/>
    <property type="molecule type" value="Genomic_DNA"/>
</dbReference>
<dbReference type="PIR" id="A41044">
    <property type="entry name" value="A41044"/>
</dbReference>
<dbReference type="RefSeq" id="NP_059714.1">
    <property type="nucleotide sequence ID" value="NC_002377.1"/>
</dbReference>
<dbReference type="RefSeq" id="WP_010892402.1">
    <property type="nucleotide sequence ID" value="NZ_QSNU01000012.1"/>
</dbReference>
<dbReference type="SMR" id="P0A4N5"/>
<dbReference type="TCDB" id="3.A.1.3.5">
    <property type="family name" value="the atp-binding cassette (abc) superfamily"/>
</dbReference>
<dbReference type="PATRIC" id="fig|358.67.peg.5402"/>
<dbReference type="GO" id="GO:0043190">
    <property type="term" value="C:ATP-binding cassette (ABC) transporter complex"/>
    <property type="evidence" value="ECO:0007669"/>
    <property type="project" value="InterPro"/>
</dbReference>
<dbReference type="GO" id="GO:0022857">
    <property type="term" value="F:transmembrane transporter activity"/>
    <property type="evidence" value="ECO:0007669"/>
    <property type="project" value="InterPro"/>
</dbReference>
<dbReference type="CDD" id="cd06261">
    <property type="entry name" value="TM_PBP2"/>
    <property type="match status" value="1"/>
</dbReference>
<dbReference type="Gene3D" id="1.10.3720.10">
    <property type="entry name" value="MetI-like"/>
    <property type="match status" value="1"/>
</dbReference>
<dbReference type="InterPro" id="IPR010065">
    <property type="entry name" value="AA_ABC_transptr_permease_3TM"/>
</dbReference>
<dbReference type="InterPro" id="IPR051613">
    <property type="entry name" value="ABC_transp_permease_HisMQ"/>
</dbReference>
<dbReference type="InterPro" id="IPR000515">
    <property type="entry name" value="MetI-like"/>
</dbReference>
<dbReference type="InterPro" id="IPR035906">
    <property type="entry name" value="MetI-like_sf"/>
</dbReference>
<dbReference type="NCBIfam" id="TIGR01726">
    <property type="entry name" value="HEQRo_perm_3TM"/>
    <property type="match status" value="1"/>
</dbReference>
<dbReference type="PANTHER" id="PTHR30133:SF2">
    <property type="entry name" value="ARGININE ABC TRANSPORTER PERMEASE PROTEIN ARTQ"/>
    <property type="match status" value="1"/>
</dbReference>
<dbReference type="PANTHER" id="PTHR30133">
    <property type="entry name" value="CATIONIC AMINO ACID TRANSPORTER, MEMBRANE COMPONENT"/>
    <property type="match status" value="1"/>
</dbReference>
<dbReference type="Pfam" id="PF00528">
    <property type="entry name" value="BPD_transp_1"/>
    <property type="match status" value="1"/>
</dbReference>
<dbReference type="SUPFAM" id="SSF161098">
    <property type="entry name" value="MetI-like"/>
    <property type="match status" value="1"/>
</dbReference>
<dbReference type="PROSITE" id="PS50928">
    <property type="entry name" value="ABC_TM1"/>
    <property type="match status" value="1"/>
</dbReference>